<evidence type="ECO:0000255" key="1">
    <source>
        <dbReference type="HAMAP-Rule" id="MF_01324"/>
    </source>
</evidence>
<comment type="function">
    <text evidence="1">DNA-dependent RNA polymerase catalyzes the transcription of DNA into RNA using the four ribonucleoside triphosphates as substrates.</text>
</comment>
<comment type="catalytic activity">
    <reaction evidence="1">
        <text>RNA(n) + a ribonucleoside 5'-triphosphate = RNA(n+1) + diphosphate</text>
        <dbReference type="Rhea" id="RHEA:21248"/>
        <dbReference type="Rhea" id="RHEA-COMP:14527"/>
        <dbReference type="Rhea" id="RHEA-COMP:17342"/>
        <dbReference type="ChEBI" id="CHEBI:33019"/>
        <dbReference type="ChEBI" id="CHEBI:61557"/>
        <dbReference type="ChEBI" id="CHEBI:140395"/>
        <dbReference type="EC" id="2.7.7.6"/>
    </reaction>
</comment>
<comment type="cofactor">
    <cofactor evidence="1">
        <name>Zn(2+)</name>
        <dbReference type="ChEBI" id="CHEBI:29105"/>
    </cofactor>
    <text evidence="1">Binds 1 Zn(2+) ion per subunit.</text>
</comment>
<comment type="subunit">
    <text evidence="1">In plastids the minimal PEP RNA polymerase catalytic core is composed of four subunits: alpha, beta, beta', and beta''. When a (nuclear-encoded) sigma factor is associated with the core the holoenzyme is formed, which can initiate transcription.</text>
</comment>
<comment type="subcellular location">
    <subcellularLocation>
        <location evidence="1">Plastid</location>
        <location evidence="1">Chloroplast</location>
    </subcellularLocation>
</comment>
<comment type="similarity">
    <text evidence="1">Belongs to the RNA polymerase beta' chain family. RpoC2 subfamily.</text>
</comment>
<sequence length="1393" mass="158018">MEVLMAERANLVFHNKAIDGTAIKRLISRLIDHFGMAYTSHILDQVKTLGFQQATATSISLGIDDLLTIPSKGWLVQDAEQQSLILEKHYHYGNVHAVEKLRQSIEIWYATSEYLRQEMNLNFRMTEPFNPVHIMSFSGARGNTSQVHQLVGMRGLMSDPQGQMIDLPIQSNLREGLSLTEYIISCYGARKGVVDTAVRTSDAGYLTRRLVEVVQHIVVRRTDCGTARGISVSPRNGMMPERIFIQTFIGRVLADNIYMGLRCIAIRNQDIGIGLANRFITFRTQTISIRTPFTCRSTSWICRLCYGRSPTHGDLVELGEAVGIIAGQSIGEPGTQLTLRTFHTGGVFTGGTAEHVRAPSNGKIKFNEDLVHPIRTRHGHPAFLCYIDLYVTIKSQDIIHNVTIPPKSFLLVQNDQYVESEQVIAEIRAGAYTLNFKEKVRKHIYSDSEGEMHWSTDVYHAPEFTYSNVHLLPKTSHLWILSGSSCRSSIVPFSLHKDQDQMNVHSLSVKRRYISSPSVNNDQVKHKFFSSDFSGKKESGIPDYSELNRSICTGHCNLIYSTILYKNSDLLAKRRRNKFIIPFQSIQEREKELMTQSAISIEIPINGIFRRNSVFAYFDDPQYRKKSSGITKYGAIGVHSIVKKEDLIEYRGVKEFKPKYQTKVDRFFFIPEEVYILPESSSLMVRNNSIIGVDTQIALNTRSRVGGLVRVERKKKKMELKIFSGDIHFPGETDKISRHSDILIPPGTVKTNSKESKKVKNWIYIQRITPTKKKYFVLVRPVIIYEIANGINLETLFPQDLLQEKDNLKLRVVNYILYGTGKPIRGISDTSIQLVRTCLVLNWDQDKKSSSIEEARAAFVEISTNGLIRDFLRINLVKFHISYIGRKRNDPSGSEPISNNGSDRTNINPFYPIYSKTRVQQSLKQNQGTISTLLNINKECQSLIILSSSNCFQMDPFNDVKHHNVIKESIKRDPIIPIRNSLGPLGTALQIANFYLFYHLNLITHNQISVTKYSKLYNLKQTFQVLKYYLMDENGRIVNPDPCSNSVLNPFNLNWYFLHHNYCESFFTIISLGQFICENLCMAKNGPHLKSGQVIIVHIDSVVIRSAKPYLATPGATVHGHYGEILYEGNTLVTFIYEKSRSGDITQGLPKVEQVLEVRSIDSISINLEKRVEGWNECITRILGIPWGFLIGTELTIVQSRISLVNKIQKVYRSQGVQIHNRHIEIIVRQITSKVLVSEDGMSNVFSPGELIGLLRAERTGRALEEAICYGAILLGITRASLNTQSFISEASFQETTRVLAKAALRGRIDWLKGLKENVVLGGMIPVGTGFKGLVQGSRQHKNIPLKTKKKNLFEGEFRDRDILFHHRELFDSCISKNLYDTSEQSFIGFNDS</sequence>
<keyword id="KW-0150">Chloroplast</keyword>
<keyword id="KW-0240">DNA-directed RNA polymerase</keyword>
<keyword id="KW-0479">Metal-binding</keyword>
<keyword id="KW-0548">Nucleotidyltransferase</keyword>
<keyword id="KW-0934">Plastid</keyword>
<keyword id="KW-0804">Transcription</keyword>
<keyword id="KW-0808">Transferase</keyword>
<keyword id="KW-0862">Zinc</keyword>
<protein>
    <recommendedName>
        <fullName evidence="1">DNA-directed RNA polymerase subunit beta''</fullName>
        <ecNumber evidence="1">2.7.7.6</ecNumber>
    </recommendedName>
    <alternativeName>
        <fullName evidence="1">PEP</fullName>
    </alternativeName>
    <alternativeName>
        <fullName evidence="1">Plastid-encoded RNA polymerase subunit beta''</fullName>
        <shortName evidence="1">RNA polymerase subunit beta''</shortName>
    </alternativeName>
</protein>
<gene>
    <name evidence="1" type="primary">rpoC2</name>
</gene>
<accession>B1NWE0</accession>
<reference key="1">
    <citation type="journal article" date="2008" name="Theor. Appl. Genet.">
        <title>The complete nucleotide sequence of the cassava (Manihot esculenta) chloroplast genome and the evolution of atpF in Malpighiales: RNA editing and multiple losses of a group II intron.</title>
        <authorList>
            <person name="Daniell H."/>
            <person name="Wurdack K.J."/>
            <person name="Kanagaraj A."/>
            <person name="Lee S.-B."/>
            <person name="Saski C."/>
            <person name="Jansen R.K."/>
        </authorList>
    </citation>
    <scope>NUCLEOTIDE SEQUENCE [LARGE SCALE GENOMIC DNA]</scope>
    <source>
        <strain>cv. TME3</strain>
    </source>
</reference>
<organism>
    <name type="scientific">Manihot esculenta</name>
    <name type="common">Cassava</name>
    <name type="synonym">Jatropha manihot</name>
    <dbReference type="NCBI Taxonomy" id="3983"/>
    <lineage>
        <taxon>Eukaryota</taxon>
        <taxon>Viridiplantae</taxon>
        <taxon>Streptophyta</taxon>
        <taxon>Embryophyta</taxon>
        <taxon>Tracheophyta</taxon>
        <taxon>Spermatophyta</taxon>
        <taxon>Magnoliopsida</taxon>
        <taxon>eudicotyledons</taxon>
        <taxon>Gunneridae</taxon>
        <taxon>Pentapetalae</taxon>
        <taxon>rosids</taxon>
        <taxon>fabids</taxon>
        <taxon>Malpighiales</taxon>
        <taxon>Euphorbiaceae</taxon>
        <taxon>Crotonoideae</taxon>
        <taxon>Manihoteae</taxon>
        <taxon>Manihot</taxon>
    </lineage>
</organism>
<geneLocation type="chloroplast"/>
<proteinExistence type="inferred from homology"/>
<name>RPOC2_MANES</name>
<feature type="chain" id="PRO_0000353570" description="DNA-directed RNA polymerase subunit beta''">
    <location>
        <begin position="1"/>
        <end position="1393"/>
    </location>
</feature>
<feature type="binding site" evidence="1">
    <location>
        <position position="224"/>
    </location>
    <ligand>
        <name>Zn(2+)</name>
        <dbReference type="ChEBI" id="CHEBI:29105"/>
    </ligand>
</feature>
<feature type="binding site" evidence="1">
    <location>
        <position position="295"/>
    </location>
    <ligand>
        <name>Zn(2+)</name>
        <dbReference type="ChEBI" id="CHEBI:29105"/>
    </ligand>
</feature>
<feature type="binding site" evidence="1">
    <location>
        <position position="302"/>
    </location>
    <ligand>
        <name>Zn(2+)</name>
        <dbReference type="ChEBI" id="CHEBI:29105"/>
    </ligand>
</feature>
<feature type="binding site" evidence="1">
    <location>
        <position position="305"/>
    </location>
    <ligand>
        <name>Zn(2+)</name>
        <dbReference type="ChEBI" id="CHEBI:29105"/>
    </ligand>
</feature>
<dbReference type="EC" id="2.7.7.6" evidence="1"/>
<dbReference type="EMBL" id="EU117376">
    <property type="protein sequence ID" value="ABV66144.1"/>
    <property type="molecule type" value="Genomic_DNA"/>
</dbReference>
<dbReference type="RefSeq" id="YP_001718427.1">
    <property type="nucleotide sequence ID" value="NC_010433.1"/>
</dbReference>
<dbReference type="SMR" id="B1NWE0"/>
<dbReference type="GeneID" id="5999961"/>
<dbReference type="KEGG" id="mesc:5999961"/>
<dbReference type="OrthoDB" id="815789at2759"/>
<dbReference type="GO" id="GO:0009507">
    <property type="term" value="C:chloroplast"/>
    <property type="evidence" value="ECO:0007669"/>
    <property type="project" value="UniProtKB-SubCell"/>
</dbReference>
<dbReference type="GO" id="GO:0000428">
    <property type="term" value="C:DNA-directed RNA polymerase complex"/>
    <property type="evidence" value="ECO:0007669"/>
    <property type="project" value="UniProtKB-KW"/>
</dbReference>
<dbReference type="GO" id="GO:0005739">
    <property type="term" value="C:mitochondrion"/>
    <property type="evidence" value="ECO:0007669"/>
    <property type="project" value="GOC"/>
</dbReference>
<dbReference type="GO" id="GO:0003677">
    <property type="term" value="F:DNA binding"/>
    <property type="evidence" value="ECO:0007669"/>
    <property type="project" value="UniProtKB-UniRule"/>
</dbReference>
<dbReference type="GO" id="GO:0003899">
    <property type="term" value="F:DNA-directed RNA polymerase activity"/>
    <property type="evidence" value="ECO:0007669"/>
    <property type="project" value="UniProtKB-UniRule"/>
</dbReference>
<dbReference type="GO" id="GO:0008270">
    <property type="term" value="F:zinc ion binding"/>
    <property type="evidence" value="ECO:0007669"/>
    <property type="project" value="UniProtKB-UniRule"/>
</dbReference>
<dbReference type="GO" id="GO:0006351">
    <property type="term" value="P:DNA-templated transcription"/>
    <property type="evidence" value="ECO:0007669"/>
    <property type="project" value="UniProtKB-UniRule"/>
</dbReference>
<dbReference type="CDD" id="cd02655">
    <property type="entry name" value="RNAP_beta'_C"/>
    <property type="match status" value="1"/>
</dbReference>
<dbReference type="FunFam" id="1.10.132.30:FF:000002">
    <property type="entry name" value="DNA-directed RNA polymerase subunit beta"/>
    <property type="match status" value="1"/>
</dbReference>
<dbReference type="FunFam" id="1.10.1790.20:FF:000002">
    <property type="entry name" value="DNA-directed RNA polymerase subunit beta"/>
    <property type="match status" value="1"/>
</dbReference>
<dbReference type="Gene3D" id="1.10.132.30">
    <property type="match status" value="1"/>
</dbReference>
<dbReference type="Gene3D" id="1.10.150.390">
    <property type="match status" value="1"/>
</dbReference>
<dbReference type="Gene3D" id="1.10.1790.20">
    <property type="match status" value="1"/>
</dbReference>
<dbReference type="Gene3D" id="1.10.274.100">
    <property type="entry name" value="RNA polymerase Rpb1, domain 3"/>
    <property type="match status" value="1"/>
</dbReference>
<dbReference type="HAMAP" id="MF_01324">
    <property type="entry name" value="RNApol_bact_RpoC2"/>
    <property type="match status" value="1"/>
</dbReference>
<dbReference type="InterPro" id="IPR012756">
    <property type="entry name" value="DNA-dir_RpoC2_beta_pp"/>
</dbReference>
<dbReference type="InterPro" id="IPR050254">
    <property type="entry name" value="RNA_pol_beta''_euk"/>
</dbReference>
<dbReference type="InterPro" id="IPR042102">
    <property type="entry name" value="RNA_pol_Rpb1_3_sf"/>
</dbReference>
<dbReference type="InterPro" id="IPR007083">
    <property type="entry name" value="RNA_pol_Rpb1_4"/>
</dbReference>
<dbReference type="InterPro" id="IPR007081">
    <property type="entry name" value="RNA_pol_Rpb1_5"/>
</dbReference>
<dbReference type="InterPro" id="IPR038120">
    <property type="entry name" value="Rpb1_funnel_sf"/>
</dbReference>
<dbReference type="NCBIfam" id="TIGR02388">
    <property type="entry name" value="rpoC2_cyan"/>
    <property type="match status" value="1"/>
</dbReference>
<dbReference type="PANTHER" id="PTHR34995">
    <property type="entry name" value="DNA-DIRECTED RNA POLYMERASE SUBUNIT BETA"/>
    <property type="match status" value="1"/>
</dbReference>
<dbReference type="PANTHER" id="PTHR34995:SF1">
    <property type="entry name" value="DNA-DIRECTED RNA POLYMERASE SUBUNIT BETA"/>
    <property type="match status" value="1"/>
</dbReference>
<dbReference type="Pfam" id="PF05000">
    <property type="entry name" value="RNA_pol_Rpb1_4"/>
    <property type="match status" value="1"/>
</dbReference>
<dbReference type="Pfam" id="PF04998">
    <property type="entry name" value="RNA_pol_Rpb1_5"/>
    <property type="match status" value="2"/>
</dbReference>
<dbReference type="SUPFAM" id="SSF64484">
    <property type="entry name" value="beta and beta-prime subunits of DNA dependent RNA-polymerase"/>
    <property type="match status" value="1"/>
</dbReference>